<sequence>MTKLILAPEVQAAFANGQPVVALESTVISHGLPYPHNREIALQLEATVRAGGAVPATIAVIQGQVHVGLTNEQIEHFATATDVLKLSRRDIGYAVAAGRDGATTVAATMAIAELAGIQVFATGGIGGVHRGARDTWDVSADLGELGKSSVLVVCAGAKSILDLPATLEVLETYGVPVVGYTTEELPAFYSAHSGLQLGRRVDDPTQAAAAWAAHRLYGGGSGMVLAVPPPVEKALDPQFVEAAIGRAIAQAEAAGIRGAAVTPFLLSAMARETEGESIATNTALLNNNAQVAAQVAVALFQSV</sequence>
<protein>
    <recommendedName>
        <fullName evidence="1">Pseudouridine-5'-phosphate glycosidase</fullName>
        <shortName evidence="1">PsiMP glycosidase</shortName>
        <ecNumber evidence="1">4.2.1.70</ecNumber>
    </recommendedName>
</protein>
<gene>
    <name evidence="1" type="primary">psuG</name>
    <name type="ordered locus">Haur_3009</name>
</gene>
<dbReference type="EC" id="4.2.1.70" evidence="1"/>
<dbReference type="EMBL" id="CP000875">
    <property type="protein sequence ID" value="ABX05647.1"/>
    <property type="molecule type" value="Genomic_DNA"/>
</dbReference>
<dbReference type="SMR" id="A9B4S4"/>
<dbReference type="STRING" id="316274.Haur_3009"/>
<dbReference type="KEGG" id="hau:Haur_3009"/>
<dbReference type="eggNOG" id="COG2313">
    <property type="taxonomic scope" value="Bacteria"/>
</dbReference>
<dbReference type="HOGENOM" id="CLU_012201_0_1_0"/>
<dbReference type="InParanoid" id="A9B4S4"/>
<dbReference type="Proteomes" id="UP000000787">
    <property type="component" value="Chromosome"/>
</dbReference>
<dbReference type="GO" id="GO:0005737">
    <property type="term" value="C:cytoplasm"/>
    <property type="evidence" value="ECO:0007669"/>
    <property type="project" value="TreeGrafter"/>
</dbReference>
<dbReference type="GO" id="GO:0016798">
    <property type="term" value="F:hydrolase activity, acting on glycosyl bonds"/>
    <property type="evidence" value="ECO:0007669"/>
    <property type="project" value="UniProtKB-KW"/>
</dbReference>
<dbReference type="GO" id="GO:0046872">
    <property type="term" value="F:metal ion binding"/>
    <property type="evidence" value="ECO:0007669"/>
    <property type="project" value="UniProtKB-KW"/>
</dbReference>
<dbReference type="GO" id="GO:0004730">
    <property type="term" value="F:pseudouridylate synthase activity"/>
    <property type="evidence" value="ECO:0007669"/>
    <property type="project" value="UniProtKB-UniRule"/>
</dbReference>
<dbReference type="GO" id="GO:0046113">
    <property type="term" value="P:nucleobase catabolic process"/>
    <property type="evidence" value="ECO:0007669"/>
    <property type="project" value="UniProtKB-UniRule"/>
</dbReference>
<dbReference type="Gene3D" id="3.40.1790.10">
    <property type="entry name" value="Indigoidine synthase domain"/>
    <property type="match status" value="1"/>
</dbReference>
<dbReference type="HAMAP" id="MF_01876">
    <property type="entry name" value="PsiMP_glycosidase"/>
    <property type="match status" value="1"/>
</dbReference>
<dbReference type="InterPro" id="IPR022830">
    <property type="entry name" value="Indigdn_synthA-like"/>
</dbReference>
<dbReference type="InterPro" id="IPR007342">
    <property type="entry name" value="PsuG"/>
</dbReference>
<dbReference type="PANTHER" id="PTHR42909:SF1">
    <property type="entry name" value="CARBOHYDRATE KINASE PFKB DOMAIN-CONTAINING PROTEIN"/>
    <property type="match status" value="1"/>
</dbReference>
<dbReference type="PANTHER" id="PTHR42909">
    <property type="entry name" value="ZGC:136858"/>
    <property type="match status" value="1"/>
</dbReference>
<dbReference type="Pfam" id="PF04227">
    <property type="entry name" value="Indigoidine_A"/>
    <property type="match status" value="1"/>
</dbReference>
<dbReference type="SUPFAM" id="SSF110581">
    <property type="entry name" value="Indigoidine synthase A-like"/>
    <property type="match status" value="1"/>
</dbReference>
<organism>
    <name type="scientific">Herpetosiphon aurantiacus (strain ATCC 23779 / DSM 785 / 114-95)</name>
    <dbReference type="NCBI Taxonomy" id="316274"/>
    <lineage>
        <taxon>Bacteria</taxon>
        <taxon>Bacillati</taxon>
        <taxon>Chloroflexota</taxon>
        <taxon>Chloroflexia</taxon>
        <taxon>Herpetosiphonales</taxon>
        <taxon>Herpetosiphonaceae</taxon>
        <taxon>Herpetosiphon</taxon>
    </lineage>
</organism>
<proteinExistence type="inferred from homology"/>
<accession>A9B4S4</accession>
<keyword id="KW-0326">Glycosidase</keyword>
<keyword id="KW-0378">Hydrolase</keyword>
<keyword id="KW-0456">Lyase</keyword>
<keyword id="KW-0464">Manganese</keyword>
<keyword id="KW-0479">Metal-binding</keyword>
<name>PSUG_HERA2</name>
<evidence type="ECO:0000255" key="1">
    <source>
        <dbReference type="HAMAP-Rule" id="MF_01876"/>
    </source>
</evidence>
<comment type="function">
    <text evidence="1">Catalyzes the reversible cleavage of pseudouridine 5'-phosphate (PsiMP) to ribose 5-phosphate and uracil. Functions biologically in the cleavage direction, as part of a pseudouridine degradation pathway.</text>
</comment>
<comment type="catalytic activity">
    <reaction evidence="1">
        <text>D-ribose 5-phosphate + uracil = psi-UMP + H2O</text>
        <dbReference type="Rhea" id="RHEA:18337"/>
        <dbReference type="ChEBI" id="CHEBI:15377"/>
        <dbReference type="ChEBI" id="CHEBI:17568"/>
        <dbReference type="ChEBI" id="CHEBI:58380"/>
        <dbReference type="ChEBI" id="CHEBI:78346"/>
        <dbReference type="EC" id="4.2.1.70"/>
    </reaction>
</comment>
<comment type="cofactor">
    <cofactor evidence="1">
        <name>Mn(2+)</name>
        <dbReference type="ChEBI" id="CHEBI:29035"/>
    </cofactor>
    <text evidence="1">Binds 1 Mn(2+) ion per subunit.</text>
</comment>
<comment type="subunit">
    <text evidence="1">Homotrimer.</text>
</comment>
<comment type="similarity">
    <text evidence="1">Belongs to the pseudouridine-5'-phosphate glycosidase family.</text>
</comment>
<reference key="1">
    <citation type="journal article" date="2011" name="Stand. Genomic Sci.">
        <title>Complete genome sequence of the filamentous gliding predatory bacterium Herpetosiphon aurantiacus type strain (114-95(T)).</title>
        <authorList>
            <person name="Kiss H."/>
            <person name="Nett M."/>
            <person name="Domin N."/>
            <person name="Martin K."/>
            <person name="Maresca J.A."/>
            <person name="Copeland A."/>
            <person name="Lapidus A."/>
            <person name="Lucas S."/>
            <person name="Berry K.W."/>
            <person name="Glavina Del Rio T."/>
            <person name="Dalin E."/>
            <person name="Tice H."/>
            <person name="Pitluck S."/>
            <person name="Richardson P."/>
            <person name="Bruce D."/>
            <person name="Goodwin L."/>
            <person name="Han C."/>
            <person name="Detter J.C."/>
            <person name="Schmutz J."/>
            <person name="Brettin T."/>
            <person name="Land M."/>
            <person name="Hauser L."/>
            <person name="Kyrpides N.C."/>
            <person name="Ivanova N."/>
            <person name="Goeker M."/>
            <person name="Woyke T."/>
            <person name="Klenk H.P."/>
            <person name="Bryant D.A."/>
        </authorList>
    </citation>
    <scope>NUCLEOTIDE SEQUENCE [LARGE SCALE GENOMIC DNA]</scope>
    <source>
        <strain>ATCC 23779 / DSM 785 / 114-95</strain>
    </source>
</reference>
<feature type="chain" id="PRO_0000390524" description="Pseudouridine-5'-phosphate glycosidase">
    <location>
        <begin position="1"/>
        <end position="303"/>
    </location>
</feature>
<feature type="active site" description="Proton donor" evidence="1">
    <location>
        <position position="24"/>
    </location>
</feature>
<feature type="active site" description="Nucleophile" evidence="1">
    <location>
        <position position="158"/>
    </location>
</feature>
<feature type="binding site" evidence="1">
    <location>
        <position position="85"/>
    </location>
    <ligand>
        <name>substrate</name>
    </ligand>
</feature>
<feature type="binding site" evidence="1">
    <location>
        <position position="105"/>
    </location>
    <ligand>
        <name>substrate</name>
    </ligand>
</feature>
<feature type="binding site" evidence="1">
    <location>
        <position position="137"/>
    </location>
    <ligand>
        <name>Mn(2+)</name>
        <dbReference type="ChEBI" id="CHEBI:29035"/>
    </ligand>
</feature>
<feature type="binding site" evidence="1">
    <location>
        <begin position="139"/>
        <end position="141"/>
    </location>
    <ligand>
        <name>substrate</name>
    </ligand>
</feature>